<evidence type="ECO:0000255" key="1">
    <source>
        <dbReference type="HAMAP-Rule" id="MF_00193"/>
    </source>
</evidence>
<protein>
    <recommendedName>
        <fullName evidence="1">NH(3)-dependent NAD(+) synthetase</fullName>
        <ecNumber evidence="1">6.3.1.5</ecNumber>
    </recommendedName>
</protein>
<name>NADE_ECO45</name>
<organism>
    <name type="scientific">Escherichia coli O45:K1 (strain S88 / ExPEC)</name>
    <dbReference type="NCBI Taxonomy" id="585035"/>
    <lineage>
        <taxon>Bacteria</taxon>
        <taxon>Pseudomonadati</taxon>
        <taxon>Pseudomonadota</taxon>
        <taxon>Gammaproteobacteria</taxon>
        <taxon>Enterobacterales</taxon>
        <taxon>Enterobacteriaceae</taxon>
        <taxon>Escherichia</taxon>
    </lineage>
</organism>
<accession>B7MAV1</accession>
<keyword id="KW-0067">ATP-binding</keyword>
<keyword id="KW-0436">Ligase</keyword>
<keyword id="KW-0460">Magnesium</keyword>
<keyword id="KW-0479">Metal-binding</keyword>
<keyword id="KW-0520">NAD</keyword>
<keyword id="KW-0547">Nucleotide-binding</keyword>
<keyword id="KW-1185">Reference proteome</keyword>
<dbReference type="EC" id="6.3.1.5" evidence="1"/>
<dbReference type="EMBL" id="CU928161">
    <property type="protein sequence ID" value="CAR03100.1"/>
    <property type="molecule type" value="Genomic_DNA"/>
</dbReference>
<dbReference type="RefSeq" id="WP_000175056.1">
    <property type="nucleotide sequence ID" value="NC_011742.1"/>
</dbReference>
<dbReference type="SMR" id="B7MAV1"/>
<dbReference type="KEGG" id="ecz:ECS88_1792"/>
<dbReference type="HOGENOM" id="CLU_059327_3_0_6"/>
<dbReference type="UniPathway" id="UPA00253">
    <property type="reaction ID" value="UER00333"/>
</dbReference>
<dbReference type="Proteomes" id="UP000000747">
    <property type="component" value="Chromosome"/>
</dbReference>
<dbReference type="GO" id="GO:0005737">
    <property type="term" value="C:cytoplasm"/>
    <property type="evidence" value="ECO:0007669"/>
    <property type="project" value="InterPro"/>
</dbReference>
<dbReference type="GO" id="GO:0005524">
    <property type="term" value="F:ATP binding"/>
    <property type="evidence" value="ECO:0007669"/>
    <property type="project" value="UniProtKB-UniRule"/>
</dbReference>
<dbReference type="GO" id="GO:0004359">
    <property type="term" value="F:glutaminase activity"/>
    <property type="evidence" value="ECO:0007669"/>
    <property type="project" value="InterPro"/>
</dbReference>
<dbReference type="GO" id="GO:0046872">
    <property type="term" value="F:metal ion binding"/>
    <property type="evidence" value="ECO:0007669"/>
    <property type="project" value="UniProtKB-KW"/>
</dbReference>
<dbReference type="GO" id="GO:0003952">
    <property type="term" value="F:NAD+ synthase (glutamine-hydrolyzing) activity"/>
    <property type="evidence" value="ECO:0007669"/>
    <property type="project" value="InterPro"/>
</dbReference>
<dbReference type="GO" id="GO:0008795">
    <property type="term" value="F:NAD+ synthase activity"/>
    <property type="evidence" value="ECO:0007669"/>
    <property type="project" value="UniProtKB-UniRule"/>
</dbReference>
<dbReference type="GO" id="GO:0009435">
    <property type="term" value="P:NAD biosynthetic process"/>
    <property type="evidence" value="ECO:0007669"/>
    <property type="project" value="UniProtKB-UniRule"/>
</dbReference>
<dbReference type="CDD" id="cd00553">
    <property type="entry name" value="NAD_synthase"/>
    <property type="match status" value="1"/>
</dbReference>
<dbReference type="FunFam" id="3.40.50.620:FF:000015">
    <property type="entry name" value="NH(3)-dependent NAD(+) synthetase"/>
    <property type="match status" value="1"/>
</dbReference>
<dbReference type="Gene3D" id="3.40.50.620">
    <property type="entry name" value="HUPs"/>
    <property type="match status" value="1"/>
</dbReference>
<dbReference type="HAMAP" id="MF_00193">
    <property type="entry name" value="NadE_ammonia_dep"/>
    <property type="match status" value="1"/>
</dbReference>
<dbReference type="InterPro" id="IPR022310">
    <property type="entry name" value="NAD/GMP_synthase"/>
</dbReference>
<dbReference type="InterPro" id="IPR003694">
    <property type="entry name" value="NAD_synthase"/>
</dbReference>
<dbReference type="InterPro" id="IPR022926">
    <property type="entry name" value="NH(3)-dep_NAD(+)_synth"/>
</dbReference>
<dbReference type="InterPro" id="IPR014729">
    <property type="entry name" value="Rossmann-like_a/b/a_fold"/>
</dbReference>
<dbReference type="NCBIfam" id="TIGR00552">
    <property type="entry name" value="nadE"/>
    <property type="match status" value="1"/>
</dbReference>
<dbReference type="NCBIfam" id="NF001979">
    <property type="entry name" value="PRK00768.1"/>
    <property type="match status" value="1"/>
</dbReference>
<dbReference type="PANTHER" id="PTHR23090">
    <property type="entry name" value="NH 3 /GLUTAMINE-DEPENDENT NAD + SYNTHETASE"/>
    <property type="match status" value="1"/>
</dbReference>
<dbReference type="PANTHER" id="PTHR23090:SF7">
    <property type="entry name" value="NH(3)-DEPENDENT NAD(+) SYNTHETASE"/>
    <property type="match status" value="1"/>
</dbReference>
<dbReference type="Pfam" id="PF02540">
    <property type="entry name" value="NAD_synthase"/>
    <property type="match status" value="1"/>
</dbReference>
<dbReference type="SUPFAM" id="SSF52402">
    <property type="entry name" value="Adenine nucleotide alpha hydrolases-like"/>
    <property type="match status" value="1"/>
</dbReference>
<feature type="chain" id="PRO_1000118617" description="NH(3)-dependent NAD(+) synthetase">
    <location>
        <begin position="1"/>
        <end position="275"/>
    </location>
</feature>
<feature type="binding site" evidence="1">
    <location>
        <begin position="46"/>
        <end position="53"/>
    </location>
    <ligand>
        <name>ATP</name>
        <dbReference type="ChEBI" id="CHEBI:30616"/>
    </ligand>
</feature>
<feature type="binding site" evidence="1">
    <location>
        <position position="52"/>
    </location>
    <ligand>
        <name>Mg(2+)</name>
        <dbReference type="ChEBI" id="CHEBI:18420"/>
    </ligand>
</feature>
<feature type="binding site" evidence="1">
    <location>
        <position position="140"/>
    </location>
    <ligand>
        <name>deamido-NAD(+)</name>
        <dbReference type="ChEBI" id="CHEBI:58437"/>
    </ligand>
</feature>
<feature type="binding site" evidence="1">
    <location>
        <position position="160"/>
    </location>
    <ligand>
        <name>ATP</name>
        <dbReference type="ChEBI" id="CHEBI:30616"/>
    </ligand>
</feature>
<feature type="binding site" evidence="1">
    <location>
        <position position="165"/>
    </location>
    <ligand>
        <name>Mg(2+)</name>
        <dbReference type="ChEBI" id="CHEBI:18420"/>
    </ligand>
</feature>
<feature type="binding site" evidence="1">
    <location>
        <position position="173"/>
    </location>
    <ligand>
        <name>deamido-NAD(+)</name>
        <dbReference type="ChEBI" id="CHEBI:58437"/>
    </ligand>
</feature>
<feature type="binding site" evidence="1">
    <location>
        <position position="180"/>
    </location>
    <ligand>
        <name>deamido-NAD(+)</name>
        <dbReference type="ChEBI" id="CHEBI:58437"/>
    </ligand>
</feature>
<feature type="binding site" evidence="1">
    <location>
        <position position="189"/>
    </location>
    <ligand>
        <name>ATP</name>
        <dbReference type="ChEBI" id="CHEBI:30616"/>
    </ligand>
</feature>
<feature type="binding site" evidence="1">
    <location>
        <position position="211"/>
    </location>
    <ligand>
        <name>ATP</name>
        <dbReference type="ChEBI" id="CHEBI:30616"/>
    </ligand>
</feature>
<feature type="binding site" evidence="1">
    <location>
        <begin position="260"/>
        <end position="261"/>
    </location>
    <ligand>
        <name>deamido-NAD(+)</name>
        <dbReference type="ChEBI" id="CHEBI:58437"/>
    </ligand>
</feature>
<proteinExistence type="inferred from homology"/>
<gene>
    <name evidence="1" type="primary">nadE</name>
    <name type="ordered locus">ECS88_1792</name>
</gene>
<reference key="1">
    <citation type="journal article" date="2009" name="PLoS Genet.">
        <title>Organised genome dynamics in the Escherichia coli species results in highly diverse adaptive paths.</title>
        <authorList>
            <person name="Touchon M."/>
            <person name="Hoede C."/>
            <person name="Tenaillon O."/>
            <person name="Barbe V."/>
            <person name="Baeriswyl S."/>
            <person name="Bidet P."/>
            <person name="Bingen E."/>
            <person name="Bonacorsi S."/>
            <person name="Bouchier C."/>
            <person name="Bouvet O."/>
            <person name="Calteau A."/>
            <person name="Chiapello H."/>
            <person name="Clermont O."/>
            <person name="Cruveiller S."/>
            <person name="Danchin A."/>
            <person name="Diard M."/>
            <person name="Dossat C."/>
            <person name="Karoui M.E."/>
            <person name="Frapy E."/>
            <person name="Garry L."/>
            <person name="Ghigo J.M."/>
            <person name="Gilles A.M."/>
            <person name="Johnson J."/>
            <person name="Le Bouguenec C."/>
            <person name="Lescat M."/>
            <person name="Mangenot S."/>
            <person name="Martinez-Jehanne V."/>
            <person name="Matic I."/>
            <person name="Nassif X."/>
            <person name="Oztas S."/>
            <person name="Petit M.A."/>
            <person name="Pichon C."/>
            <person name="Rouy Z."/>
            <person name="Ruf C.S."/>
            <person name="Schneider D."/>
            <person name="Tourret J."/>
            <person name="Vacherie B."/>
            <person name="Vallenet D."/>
            <person name="Medigue C."/>
            <person name="Rocha E.P.C."/>
            <person name="Denamur E."/>
        </authorList>
    </citation>
    <scope>NUCLEOTIDE SEQUENCE [LARGE SCALE GENOMIC DNA]</scope>
    <source>
        <strain>S88 / ExPEC</strain>
    </source>
</reference>
<comment type="function">
    <text evidence="1">Catalyzes the ATP-dependent amidation of deamido-NAD to form NAD. Uses ammonia as a nitrogen source.</text>
</comment>
<comment type="catalytic activity">
    <reaction evidence="1">
        <text>deamido-NAD(+) + NH4(+) + ATP = AMP + diphosphate + NAD(+) + H(+)</text>
        <dbReference type="Rhea" id="RHEA:21188"/>
        <dbReference type="ChEBI" id="CHEBI:15378"/>
        <dbReference type="ChEBI" id="CHEBI:28938"/>
        <dbReference type="ChEBI" id="CHEBI:30616"/>
        <dbReference type="ChEBI" id="CHEBI:33019"/>
        <dbReference type="ChEBI" id="CHEBI:57540"/>
        <dbReference type="ChEBI" id="CHEBI:58437"/>
        <dbReference type="ChEBI" id="CHEBI:456215"/>
        <dbReference type="EC" id="6.3.1.5"/>
    </reaction>
</comment>
<comment type="pathway">
    <text evidence="1">Cofactor biosynthesis; NAD(+) biosynthesis; NAD(+) from deamido-NAD(+) (ammonia route): step 1/1.</text>
</comment>
<comment type="subunit">
    <text evidence="1">Homodimer.</text>
</comment>
<comment type="similarity">
    <text evidence="1">Belongs to the NAD synthetase family.</text>
</comment>
<sequence>MTLQQQIIKVLGAKPQINAEEEIRRSIDFLKSYLQTYPFIKSLVLGISGGQDSTLAGKLCQMAINELRQETGNESLQFIAVRLPYGVQADEQDCQDAIAFIQPDRVLTVNIKGAVLASEQALREAGIELSDFVRGNEKARERMKAQYSIAGMTSGVVVGTDHAAEAITGFFTKYGDGGTDINPLYRLNKRQGKQLLAALGCPEHLYKKAPTADLEDDRPSLPDEVALGVTYDNIDDYLEGKNVPEQVARTIENWYLKTEHKRRPPITVFDDFWKK</sequence>